<comment type="function">
    <text evidence="1">Phosphorylation of dTMP to form dTDP in both de novo and salvage pathways of dTTP synthesis.</text>
</comment>
<comment type="catalytic activity">
    <reaction evidence="1">
        <text>dTMP + ATP = dTDP + ADP</text>
        <dbReference type="Rhea" id="RHEA:13517"/>
        <dbReference type="ChEBI" id="CHEBI:30616"/>
        <dbReference type="ChEBI" id="CHEBI:58369"/>
        <dbReference type="ChEBI" id="CHEBI:63528"/>
        <dbReference type="ChEBI" id="CHEBI:456216"/>
        <dbReference type="EC" id="2.7.4.9"/>
    </reaction>
</comment>
<comment type="similarity">
    <text evidence="1">Belongs to the thymidylate kinase family.</text>
</comment>
<reference key="1">
    <citation type="submission" date="2006-08" db="EMBL/GenBank/DDBJ databases">
        <title>Complete sequence of chromosome 1 of Burkholderia cenocepacia HI2424.</title>
        <authorList>
            <person name="Copeland A."/>
            <person name="Lucas S."/>
            <person name="Lapidus A."/>
            <person name="Barry K."/>
            <person name="Detter J.C."/>
            <person name="Glavina del Rio T."/>
            <person name="Hammon N."/>
            <person name="Israni S."/>
            <person name="Pitluck S."/>
            <person name="Chain P."/>
            <person name="Malfatti S."/>
            <person name="Shin M."/>
            <person name="Vergez L."/>
            <person name="Schmutz J."/>
            <person name="Larimer F."/>
            <person name="Land M."/>
            <person name="Hauser L."/>
            <person name="Kyrpides N."/>
            <person name="Kim E."/>
            <person name="LiPuma J.J."/>
            <person name="Gonzalez C.F."/>
            <person name="Konstantinidis K."/>
            <person name="Tiedje J.M."/>
            <person name="Richardson P."/>
        </authorList>
    </citation>
    <scope>NUCLEOTIDE SEQUENCE [LARGE SCALE GENOMIC DNA]</scope>
    <source>
        <strain>HI2424</strain>
    </source>
</reference>
<evidence type="ECO:0000255" key="1">
    <source>
        <dbReference type="HAMAP-Rule" id="MF_00165"/>
    </source>
</evidence>
<feature type="chain" id="PRO_1000023156" description="Thymidylate kinase">
    <location>
        <begin position="1"/>
        <end position="206"/>
    </location>
</feature>
<feature type="binding site" evidence="1">
    <location>
        <begin position="11"/>
        <end position="18"/>
    </location>
    <ligand>
        <name>ATP</name>
        <dbReference type="ChEBI" id="CHEBI:30616"/>
    </ligand>
</feature>
<protein>
    <recommendedName>
        <fullName evidence="1">Thymidylate kinase</fullName>
        <ecNumber evidence="1">2.7.4.9</ecNumber>
    </recommendedName>
    <alternativeName>
        <fullName evidence="1">dTMP kinase</fullName>
    </alternativeName>
</protein>
<gene>
    <name evidence="1" type="primary">tmk</name>
    <name type="ordered locus">Bcen2424_1893</name>
</gene>
<name>KTHY_BURCH</name>
<proteinExistence type="inferred from homology"/>
<dbReference type="EC" id="2.7.4.9" evidence="1"/>
<dbReference type="EMBL" id="CP000458">
    <property type="protein sequence ID" value="ABK08644.1"/>
    <property type="molecule type" value="Genomic_DNA"/>
</dbReference>
<dbReference type="RefSeq" id="WP_011549634.1">
    <property type="nucleotide sequence ID" value="NC_008542.1"/>
</dbReference>
<dbReference type="SMR" id="A0K817"/>
<dbReference type="GeneID" id="83048689"/>
<dbReference type="KEGG" id="bch:Bcen2424_1893"/>
<dbReference type="HOGENOM" id="CLU_049131_0_2_4"/>
<dbReference type="GO" id="GO:0005829">
    <property type="term" value="C:cytosol"/>
    <property type="evidence" value="ECO:0007669"/>
    <property type="project" value="TreeGrafter"/>
</dbReference>
<dbReference type="GO" id="GO:0005524">
    <property type="term" value="F:ATP binding"/>
    <property type="evidence" value="ECO:0007669"/>
    <property type="project" value="UniProtKB-UniRule"/>
</dbReference>
<dbReference type="GO" id="GO:0004798">
    <property type="term" value="F:dTMP kinase activity"/>
    <property type="evidence" value="ECO:0007669"/>
    <property type="project" value="UniProtKB-UniRule"/>
</dbReference>
<dbReference type="GO" id="GO:0006233">
    <property type="term" value="P:dTDP biosynthetic process"/>
    <property type="evidence" value="ECO:0007669"/>
    <property type="project" value="InterPro"/>
</dbReference>
<dbReference type="GO" id="GO:0006235">
    <property type="term" value="P:dTTP biosynthetic process"/>
    <property type="evidence" value="ECO:0007669"/>
    <property type="project" value="UniProtKB-UniRule"/>
</dbReference>
<dbReference type="GO" id="GO:0006227">
    <property type="term" value="P:dUDP biosynthetic process"/>
    <property type="evidence" value="ECO:0007669"/>
    <property type="project" value="TreeGrafter"/>
</dbReference>
<dbReference type="CDD" id="cd01672">
    <property type="entry name" value="TMPK"/>
    <property type="match status" value="1"/>
</dbReference>
<dbReference type="FunFam" id="3.40.50.300:FF:000225">
    <property type="entry name" value="Thymidylate kinase"/>
    <property type="match status" value="1"/>
</dbReference>
<dbReference type="Gene3D" id="3.40.50.300">
    <property type="entry name" value="P-loop containing nucleotide triphosphate hydrolases"/>
    <property type="match status" value="1"/>
</dbReference>
<dbReference type="HAMAP" id="MF_00165">
    <property type="entry name" value="Thymidylate_kinase"/>
    <property type="match status" value="1"/>
</dbReference>
<dbReference type="InterPro" id="IPR027417">
    <property type="entry name" value="P-loop_NTPase"/>
</dbReference>
<dbReference type="InterPro" id="IPR039430">
    <property type="entry name" value="Thymidylate_kin-like_dom"/>
</dbReference>
<dbReference type="InterPro" id="IPR018094">
    <property type="entry name" value="Thymidylate_kinase"/>
</dbReference>
<dbReference type="NCBIfam" id="TIGR00041">
    <property type="entry name" value="DTMP_kinase"/>
    <property type="match status" value="1"/>
</dbReference>
<dbReference type="PANTHER" id="PTHR10344">
    <property type="entry name" value="THYMIDYLATE KINASE"/>
    <property type="match status" value="1"/>
</dbReference>
<dbReference type="PANTHER" id="PTHR10344:SF4">
    <property type="entry name" value="UMP-CMP KINASE 2, MITOCHONDRIAL"/>
    <property type="match status" value="1"/>
</dbReference>
<dbReference type="Pfam" id="PF02223">
    <property type="entry name" value="Thymidylate_kin"/>
    <property type="match status" value="1"/>
</dbReference>
<dbReference type="SUPFAM" id="SSF52540">
    <property type="entry name" value="P-loop containing nucleoside triphosphate hydrolases"/>
    <property type="match status" value="1"/>
</dbReference>
<organism>
    <name type="scientific">Burkholderia cenocepacia (strain HI2424)</name>
    <dbReference type="NCBI Taxonomy" id="331272"/>
    <lineage>
        <taxon>Bacteria</taxon>
        <taxon>Pseudomonadati</taxon>
        <taxon>Pseudomonadota</taxon>
        <taxon>Betaproteobacteria</taxon>
        <taxon>Burkholderiales</taxon>
        <taxon>Burkholderiaceae</taxon>
        <taxon>Burkholderia</taxon>
        <taxon>Burkholderia cepacia complex</taxon>
    </lineage>
</organism>
<accession>A0K817</accession>
<sequence length="206" mass="23127">MASGKFITFEGIDGAGKTTHLQWFCERLQGRLAAAGRQVVVTREPGGTQLGEKLREILLNQPMDLETEALLMFAARREHLALVIEPALARGDWVVSDRFTDATFAYQGGGRGLPRDKLETLERWVQGGFQPDLTVLFDVAPQVASERRGAVRMPDKFESESDAFFSRTRAEYLRRAEEAPHRFAIVDATRSIPEIRQQLERVLAAL</sequence>
<keyword id="KW-0067">ATP-binding</keyword>
<keyword id="KW-0418">Kinase</keyword>
<keyword id="KW-0545">Nucleotide biosynthesis</keyword>
<keyword id="KW-0547">Nucleotide-binding</keyword>
<keyword id="KW-0808">Transferase</keyword>